<accession>A9BPU5</accession>
<feature type="chain" id="PRO_1000143365" description="ATP synthase subunit alpha">
    <location>
        <begin position="1"/>
        <end position="517"/>
    </location>
</feature>
<feature type="binding site" evidence="1">
    <location>
        <begin position="174"/>
        <end position="181"/>
    </location>
    <ligand>
        <name>ATP</name>
        <dbReference type="ChEBI" id="CHEBI:30616"/>
    </ligand>
</feature>
<feature type="site" description="Required for activity" evidence="1">
    <location>
        <position position="378"/>
    </location>
</feature>
<dbReference type="EC" id="7.1.2.2" evidence="1"/>
<dbReference type="EMBL" id="CP000884">
    <property type="protein sequence ID" value="ABX33064.1"/>
    <property type="molecule type" value="Genomic_DNA"/>
</dbReference>
<dbReference type="RefSeq" id="WP_012202355.1">
    <property type="nucleotide sequence ID" value="NC_010002.1"/>
</dbReference>
<dbReference type="SMR" id="A9BPU5"/>
<dbReference type="STRING" id="398578.Daci_0418"/>
<dbReference type="GeneID" id="24117508"/>
<dbReference type="KEGG" id="dac:Daci_0418"/>
<dbReference type="eggNOG" id="COG0056">
    <property type="taxonomic scope" value="Bacteria"/>
</dbReference>
<dbReference type="HOGENOM" id="CLU_010091_2_1_4"/>
<dbReference type="Proteomes" id="UP000000784">
    <property type="component" value="Chromosome"/>
</dbReference>
<dbReference type="GO" id="GO:0005886">
    <property type="term" value="C:plasma membrane"/>
    <property type="evidence" value="ECO:0007669"/>
    <property type="project" value="UniProtKB-SubCell"/>
</dbReference>
<dbReference type="GO" id="GO:0045259">
    <property type="term" value="C:proton-transporting ATP synthase complex"/>
    <property type="evidence" value="ECO:0007669"/>
    <property type="project" value="UniProtKB-KW"/>
</dbReference>
<dbReference type="GO" id="GO:0043531">
    <property type="term" value="F:ADP binding"/>
    <property type="evidence" value="ECO:0007669"/>
    <property type="project" value="TreeGrafter"/>
</dbReference>
<dbReference type="GO" id="GO:0005524">
    <property type="term" value="F:ATP binding"/>
    <property type="evidence" value="ECO:0007669"/>
    <property type="project" value="UniProtKB-UniRule"/>
</dbReference>
<dbReference type="GO" id="GO:0046933">
    <property type="term" value="F:proton-transporting ATP synthase activity, rotational mechanism"/>
    <property type="evidence" value="ECO:0007669"/>
    <property type="project" value="UniProtKB-UniRule"/>
</dbReference>
<dbReference type="CDD" id="cd18113">
    <property type="entry name" value="ATP-synt_F1_alpha_C"/>
    <property type="match status" value="1"/>
</dbReference>
<dbReference type="CDD" id="cd18116">
    <property type="entry name" value="ATP-synt_F1_alpha_N"/>
    <property type="match status" value="1"/>
</dbReference>
<dbReference type="CDD" id="cd01132">
    <property type="entry name" value="F1-ATPase_alpha_CD"/>
    <property type="match status" value="1"/>
</dbReference>
<dbReference type="FunFam" id="1.20.150.20:FF:000001">
    <property type="entry name" value="ATP synthase subunit alpha"/>
    <property type="match status" value="1"/>
</dbReference>
<dbReference type="FunFam" id="2.40.30.20:FF:000001">
    <property type="entry name" value="ATP synthase subunit alpha"/>
    <property type="match status" value="1"/>
</dbReference>
<dbReference type="FunFam" id="3.40.50.300:FF:000002">
    <property type="entry name" value="ATP synthase subunit alpha"/>
    <property type="match status" value="1"/>
</dbReference>
<dbReference type="Gene3D" id="2.40.30.20">
    <property type="match status" value="1"/>
</dbReference>
<dbReference type="Gene3D" id="1.20.150.20">
    <property type="entry name" value="ATP synthase alpha/beta chain, C-terminal domain"/>
    <property type="match status" value="1"/>
</dbReference>
<dbReference type="Gene3D" id="3.40.50.300">
    <property type="entry name" value="P-loop containing nucleotide triphosphate hydrolases"/>
    <property type="match status" value="1"/>
</dbReference>
<dbReference type="HAMAP" id="MF_01346">
    <property type="entry name" value="ATP_synth_alpha_bact"/>
    <property type="match status" value="1"/>
</dbReference>
<dbReference type="InterPro" id="IPR023366">
    <property type="entry name" value="ATP_synth_asu-like_sf"/>
</dbReference>
<dbReference type="InterPro" id="IPR000793">
    <property type="entry name" value="ATP_synth_asu_C"/>
</dbReference>
<dbReference type="InterPro" id="IPR038376">
    <property type="entry name" value="ATP_synth_asu_C_sf"/>
</dbReference>
<dbReference type="InterPro" id="IPR033732">
    <property type="entry name" value="ATP_synth_F1_a_nt-bd_dom"/>
</dbReference>
<dbReference type="InterPro" id="IPR005294">
    <property type="entry name" value="ATP_synth_F1_asu"/>
</dbReference>
<dbReference type="InterPro" id="IPR020003">
    <property type="entry name" value="ATPase_a/bsu_AS"/>
</dbReference>
<dbReference type="InterPro" id="IPR004100">
    <property type="entry name" value="ATPase_F1/V1/A1_a/bsu_N"/>
</dbReference>
<dbReference type="InterPro" id="IPR036121">
    <property type="entry name" value="ATPase_F1/V1/A1_a/bsu_N_sf"/>
</dbReference>
<dbReference type="InterPro" id="IPR000194">
    <property type="entry name" value="ATPase_F1/V1/A1_a/bsu_nucl-bd"/>
</dbReference>
<dbReference type="InterPro" id="IPR027417">
    <property type="entry name" value="P-loop_NTPase"/>
</dbReference>
<dbReference type="NCBIfam" id="TIGR00962">
    <property type="entry name" value="atpA"/>
    <property type="match status" value="1"/>
</dbReference>
<dbReference type="NCBIfam" id="NF009884">
    <property type="entry name" value="PRK13343.1"/>
    <property type="match status" value="1"/>
</dbReference>
<dbReference type="PANTHER" id="PTHR48082">
    <property type="entry name" value="ATP SYNTHASE SUBUNIT ALPHA, MITOCHONDRIAL"/>
    <property type="match status" value="1"/>
</dbReference>
<dbReference type="PANTHER" id="PTHR48082:SF2">
    <property type="entry name" value="ATP SYNTHASE SUBUNIT ALPHA, MITOCHONDRIAL"/>
    <property type="match status" value="1"/>
</dbReference>
<dbReference type="Pfam" id="PF00006">
    <property type="entry name" value="ATP-synt_ab"/>
    <property type="match status" value="1"/>
</dbReference>
<dbReference type="Pfam" id="PF00306">
    <property type="entry name" value="ATP-synt_ab_C"/>
    <property type="match status" value="1"/>
</dbReference>
<dbReference type="Pfam" id="PF02874">
    <property type="entry name" value="ATP-synt_ab_N"/>
    <property type="match status" value="1"/>
</dbReference>
<dbReference type="PIRSF" id="PIRSF039088">
    <property type="entry name" value="F_ATPase_subunit_alpha"/>
    <property type="match status" value="1"/>
</dbReference>
<dbReference type="SUPFAM" id="SSF47917">
    <property type="entry name" value="C-terminal domain of alpha and beta subunits of F1 ATP synthase"/>
    <property type="match status" value="1"/>
</dbReference>
<dbReference type="SUPFAM" id="SSF50615">
    <property type="entry name" value="N-terminal domain of alpha and beta subunits of F1 ATP synthase"/>
    <property type="match status" value="1"/>
</dbReference>
<dbReference type="SUPFAM" id="SSF52540">
    <property type="entry name" value="P-loop containing nucleoside triphosphate hydrolases"/>
    <property type="match status" value="1"/>
</dbReference>
<dbReference type="PROSITE" id="PS00152">
    <property type="entry name" value="ATPASE_ALPHA_BETA"/>
    <property type="match status" value="1"/>
</dbReference>
<organism>
    <name type="scientific">Delftia acidovorans (strain DSM 14801 / SPH-1)</name>
    <dbReference type="NCBI Taxonomy" id="398578"/>
    <lineage>
        <taxon>Bacteria</taxon>
        <taxon>Pseudomonadati</taxon>
        <taxon>Pseudomonadota</taxon>
        <taxon>Betaproteobacteria</taxon>
        <taxon>Burkholderiales</taxon>
        <taxon>Comamonadaceae</taxon>
        <taxon>Delftia</taxon>
    </lineage>
</organism>
<proteinExistence type="inferred from homology"/>
<name>ATPA_DELAS</name>
<protein>
    <recommendedName>
        <fullName evidence="1">ATP synthase subunit alpha</fullName>
        <ecNumber evidence="1">7.1.2.2</ecNumber>
    </recommendedName>
    <alternativeName>
        <fullName evidence="1">ATP synthase F1 sector subunit alpha</fullName>
    </alternativeName>
    <alternativeName>
        <fullName evidence="1">F-ATPase subunit alpha</fullName>
    </alternativeName>
</protein>
<keyword id="KW-0066">ATP synthesis</keyword>
<keyword id="KW-0067">ATP-binding</keyword>
<keyword id="KW-0997">Cell inner membrane</keyword>
<keyword id="KW-1003">Cell membrane</keyword>
<keyword id="KW-0139">CF(1)</keyword>
<keyword id="KW-0375">Hydrogen ion transport</keyword>
<keyword id="KW-0406">Ion transport</keyword>
<keyword id="KW-0472">Membrane</keyword>
<keyword id="KW-0547">Nucleotide-binding</keyword>
<keyword id="KW-1185">Reference proteome</keyword>
<keyword id="KW-1278">Translocase</keyword>
<keyword id="KW-0813">Transport</keyword>
<gene>
    <name evidence="1" type="primary">atpA</name>
    <name type="ordered locus">Daci_0418</name>
</gene>
<sequence>MQLNPAEISELIKSRIEGLAGSSDIRNEGTVVSVTDGIVRVHGLSDVMQGEMLEFPAGKDGQPSFGLALNLERDSVGAVILGEYEHISEGDTVKCTGRILEVPVGPELIGRVVNALGQPIDGKGPINAKMTDVIEKVAPGVIARQSVDQPLQTGIKSIDSMVPVGRGQRELIIGDRQTGKTAVAIDAIINQKGQGVTCIYVAIGQKASSIKNVVRALEQAGAMEYTIVVAATASESAAMQYVSAYSGCTMGEYFRDRGEDALIVYDDLSKQAVAYRQVSLLLRRPPGREAFPGDVFYLHSRLLERAARVNADYVEAFTKGEVKGKTGSLTALPIIETQAGDVSAFVPTNVISITDGQIFLETSLFNAGIRPAINAGISVSRVGGAAQTKLVKGQSGGIRTDLAQYRELAAFAQFASDLDEATRKQLDRGARVTELLKQAQYSPLSTALMGASLFAVNKGYMDDIQVKQVLAFESGLHQFLKTSHGALIDKLNASKAMDKDSEAELNAAIAAFKKSFA</sequence>
<comment type="function">
    <text evidence="1">Produces ATP from ADP in the presence of a proton gradient across the membrane. The alpha chain is a regulatory subunit.</text>
</comment>
<comment type="catalytic activity">
    <reaction evidence="1">
        <text>ATP + H2O + 4 H(+)(in) = ADP + phosphate + 5 H(+)(out)</text>
        <dbReference type="Rhea" id="RHEA:57720"/>
        <dbReference type="ChEBI" id="CHEBI:15377"/>
        <dbReference type="ChEBI" id="CHEBI:15378"/>
        <dbReference type="ChEBI" id="CHEBI:30616"/>
        <dbReference type="ChEBI" id="CHEBI:43474"/>
        <dbReference type="ChEBI" id="CHEBI:456216"/>
        <dbReference type="EC" id="7.1.2.2"/>
    </reaction>
</comment>
<comment type="subunit">
    <text evidence="1">F-type ATPases have 2 components, CF(1) - the catalytic core - and CF(0) - the membrane proton channel. CF(1) has five subunits: alpha(3), beta(3), gamma(1), delta(1), epsilon(1). CF(0) has three main subunits: a(1), b(2) and c(9-12). The alpha and beta chains form an alternating ring which encloses part of the gamma chain. CF(1) is attached to CF(0) by a central stalk formed by the gamma and epsilon chains, while a peripheral stalk is formed by the delta and b chains.</text>
</comment>
<comment type="subcellular location">
    <subcellularLocation>
        <location evidence="1">Cell inner membrane</location>
        <topology evidence="1">Peripheral membrane protein</topology>
    </subcellularLocation>
</comment>
<comment type="similarity">
    <text evidence="1">Belongs to the ATPase alpha/beta chains family.</text>
</comment>
<reference key="1">
    <citation type="submission" date="2007-11" db="EMBL/GenBank/DDBJ databases">
        <title>Complete sequence of Delftia acidovorans DSM 14801 / SPH-1.</title>
        <authorList>
            <person name="Copeland A."/>
            <person name="Lucas S."/>
            <person name="Lapidus A."/>
            <person name="Barry K."/>
            <person name="Glavina del Rio T."/>
            <person name="Dalin E."/>
            <person name="Tice H."/>
            <person name="Pitluck S."/>
            <person name="Lowry S."/>
            <person name="Clum A."/>
            <person name="Schmutz J."/>
            <person name="Larimer F."/>
            <person name="Land M."/>
            <person name="Hauser L."/>
            <person name="Kyrpides N."/>
            <person name="Kim E."/>
            <person name="Schleheck D."/>
            <person name="Richardson P."/>
        </authorList>
    </citation>
    <scope>NUCLEOTIDE SEQUENCE [LARGE SCALE GENOMIC DNA]</scope>
    <source>
        <strain>DSM 14801 / SPH-1</strain>
    </source>
</reference>
<evidence type="ECO:0000255" key="1">
    <source>
        <dbReference type="HAMAP-Rule" id="MF_01346"/>
    </source>
</evidence>